<proteinExistence type="inferred from homology"/>
<sequence length="514" mass="58856">MNEEQRKAGTINILAERDRKAEKDYSKYFEQVYQPPSLKEAKKRGKQEVQYNRDFHIDEKYKGMGKGRTFLIKTYGCQMNAHDTEVMAGILNALGYSATSDINEADVILINTCAIRENAENKVFSEIGNLKHLKKERPDCLIGVCGCMSQEESVVNKILKSYQNVDMVFGTHNIHHLPEILEEAYLSKAMVVEVWSKEGDIIENLPKVRDGHIKAWVNIMYGCDKFCTYCIVPFTRGKERSRRPEDIIDEVRELAREGYQEITLLGQNVNSYGKDIEGLDYELGDLLEDISKIDIPRVRFTTSHPWDFTDRMIEVIAKGGNIVPHIHLPVQSGNNQVLKIMGRKYTRESYLDLVSRIKEAIPNVALTTDIIVGYPNETEEQFEETLSLYDDVQFEHAYTYLYSQRDGTPAAKMKDNVPLEVKKERLQRLNKKVGIYSQQAMSQYEGKIVTVLCEGSSKKDENVLAGYTDKNKLVNFKGPRESIGKLVDVKIDEAKQYSLNGTFIQEHQRSMVTQ</sequence>
<evidence type="ECO:0000255" key="1">
    <source>
        <dbReference type="HAMAP-Rule" id="MF_01864"/>
    </source>
</evidence>
<evidence type="ECO:0000255" key="2">
    <source>
        <dbReference type="PROSITE-ProRule" id="PRU01266"/>
    </source>
</evidence>
<dbReference type="EC" id="2.8.4.3" evidence="1"/>
<dbReference type="EMBL" id="AE015929">
    <property type="protein sequence ID" value="AAO04568.1"/>
    <property type="molecule type" value="Genomic_DNA"/>
</dbReference>
<dbReference type="RefSeq" id="NP_764526.1">
    <property type="nucleotide sequence ID" value="NC_004461.1"/>
</dbReference>
<dbReference type="RefSeq" id="WP_002439565.1">
    <property type="nucleotide sequence ID" value="NZ_WBME01000001.1"/>
</dbReference>
<dbReference type="SMR" id="Q8CSS3"/>
<dbReference type="GeneID" id="50018895"/>
<dbReference type="KEGG" id="sep:SE_0971"/>
<dbReference type="PATRIC" id="fig|176280.10.peg.945"/>
<dbReference type="eggNOG" id="COG0621">
    <property type="taxonomic scope" value="Bacteria"/>
</dbReference>
<dbReference type="HOGENOM" id="CLU_018697_2_0_9"/>
<dbReference type="OrthoDB" id="9805215at2"/>
<dbReference type="Proteomes" id="UP000001411">
    <property type="component" value="Chromosome"/>
</dbReference>
<dbReference type="GO" id="GO:0005829">
    <property type="term" value="C:cytosol"/>
    <property type="evidence" value="ECO:0007669"/>
    <property type="project" value="TreeGrafter"/>
</dbReference>
<dbReference type="GO" id="GO:0051539">
    <property type="term" value="F:4 iron, 4 sulfur cluster binding"/>
    <property type="evidence" value="ECO:0007669"/>
    <property type="project" value="UniProtKB-UniRule"/>
</dbReference>
<dbReference type="GO" id="GO:0046872">
    <property type="term" value="F:metal ion binding"/>
    <property type="evidence" value="ECO:0007669"/>
    <property type="project" value="UniProtKB-KW"/>
</dbReference>
<dbReference type="GO" id="GO:0035597">
    <property type="term" value="F:N6-isopentenyladenosine methylthiotransferase activity"/>
    <property type="evidence" value="ECO:0007669"/>
    <property type="project" value="TreeGrafter"/>
</dbReference>
<dbReference type="CDD" id="cd01335">
    <property type="entry name" value="Radical_SAM"/>
    <property type="match status" value="1"/>
</dbReference>
<dbReference type="FunFam" id="3.40.50.12160:FF:000006">
    <property type="entry name" value="tRNA-2-methylthio-N(6)-dimethylallyladenosine synthase"/>
    <property type="match status" value="1"/>
</dbReference>
<dbReference type="FunFam" id="3.80.30.20:FF:000001">
    <property type="entry name" value="tRNA-2-methylthio-N(6)-dimethylallyladenosine synthase 2"/>
    <property type="match status" value="1"/>
</dbReference>
<dbReference type="Gene3D" id="3.40.50.12160">
    <property type="entry name" value="Methylthiotransferase, N-terminal domain"/>
    <property type="match status" value="1"/>
</dbReference>
<dbReference type="Gene3D" id="3.80.30.20">
    <property type="entry name" value="tm_1862 like domain"/>
    <property type="match status" value="1"/>
</dbReference>
<dbReference type="HAMAP" id="MF_01864">
    <property type="entry name" value="tRNA_metthiotr_MiaB"/>
    <property type="match status" value="1"/>
</dbReference>
<dbReference type="InterPro" id="IPR006638">
    <property type="entry name" value="Elp3/MiaA/NifB-like_rSAM"/>
</dbReference>
<dbReference type="InterPro" id="IPR005839">
    <property type="entry name" value="Methylthiotransferase"/>
</dbReference>
<dbReference type="InterPro" id="IPR020612">
    <property type="entry name" value="Methylthiotransferase_CS"/>
</dbReference>
<dbReference type="InterPro" id="IPR013848">
    <property type="entry name" value="Methylthiotransferase_N"/>
</dbReference>
<dbReference type="InterPro" id="IPR038135">
    <property type="entry name" value="Methylthiotransferase_N_sf"/>
</dbReference>
<dbReference type="InterPro" id="IPR006463">
    <property type="entry name" value="MiaB_methiolase"/>
</dbReference>
<dbReference type="InterPro" id="IPR007197">
    <property type="entry name" value="rSAM"/>
</dbReference>
<dbReference type="InterPro" id="IPR023404">
    <property type="entry name" value="rSAM_horseshoe"/>
</dbReference>
<dbReference type="InterPro" id="IPR002792">
    <property type="entry name" value="TRAM_dom"/>
</dbReference>
<dbReference type="NCBIfam" id="TIGR01574">
    <property type="entry name" value="miaB-methiolase"/>
    <property type="match status" value="1"/>
</dbReference>
<dbReference type="NCBIfam" id="TIGR00089">
    <property type="entry name" value="MiaB/RimO family radical SAM methylthiotransferase"/>
    <property type="match status" value="1"/>
</dbReference>
<dbReference type="PANTHER" id="PTHR43020">
    <property type="entry name" value="CDK5 REGULATORY SUBUNIT-ASSOCIATED PROTEIN 1"/>
    <property type="match status" value="1"/>
</dbReference>
<dbReference type="PANTHER" id="PTHR43020:SF2">
    <property type="entry name" value="MITOCHONDRIAL TRNA METHYLTHIOTRANSFERASE CDK5RAP1"/>
    <property type="match status" value="1"/>
</dbReference>
<dbReference type="Pfam" id="PF04055">
    <property type="entry name" value="Radical_SAM"/>
    <property type="match status" value="1"/>
</dbReference>
<dbReference type="Pfam" id="PF01938">
    <property type="entry name" value="TRAM"/>
    <property type="match status" value="1"/>
</dbReference>
<dbReference type="Pfam" id="PF00919">
    <property type="entry name" value="UPF0004"/>
    <property type="match status" value="1"/>
</dbReference>
<dbReference type="SFLD" id="SFLDF00273">
    <property type="entry name" value="(dimethylallyl)adenosine_tRNA"/>
    <property type="match status" value="1"/>
</dbReference>
<dbReference type="SFLD" id="SFLDG01082">
    <property type="entry name" value="B12-binding_domain_containing"/>
    <property type="match status" value="1"/>
</dbReference>
<dbReference type="SFLD" id="SFLDG01061">
    <property type="entry name" value="methylthiotransferase"/>
    <property type="match status" value="1"/>
</dbReference>
<dbReference type="SMART" id="SM00729">
    <property type="entry name" value="Elp3"/>
    <property type="match status" value="1"/>
</dbReference>
<dbReference type="SUPFAM" id="SSF102114">
    <property type="entry name" value="Radical SAM enzymes"/>
    <property type="match status" value="1"/>
</dbReference>
<dbReference type="PROSITE" id="PS51449">
    <property type="entry name" value="MTTASE_N"/>
    <property type="match status" value="1"/>
</dbReference>
<dbReference type="PROSITE" id="PS01278">
    <property type="entry name" value="MTTASE_RADICAL"/>
    <property type="match status" value="1"/>
</dbReference>
<dbReference type="PROSITE" id="PS51918">
    <property type="entry name" value="RADICAL_SAM"/>
    <property type="match status" value="1"/>
</dbReference>
<dbReference type="PROSITE" id="PS50926">
    <property type="entry name" value="TRAM"/>
    <property type="match status" value="1"/>
</dbReference>
<keyword id="KW-0004">4Fe-4S</keyword>
<keyword id="KW-0963">Cytoplasm</keyword>
<keyword id="KW-0408">Iron</keyword>
<keyword id="KW-0411">Iron-sulfur</keyword>
<keyword id="KW-0479">Metal-binding</keyword>
<keyword id="KW-0949">S-adenosyl-L-methionine</keyword>
<keyword id="KW-0808">Transferase</keyword>
<keyword id="KW-0819">tRNA processing</keyword>
<organism>
    <name type="scientific">Staphylococcus epidermidis (strain ATCC 12228 / FDA PCI 1200)</name>
    <dbReference type="NCBI Taxonomy" id="176280"/>
    <lineage>
        <taxon>Bacteria</taxon>
        <taxon>Bacillati</taxon>
        <taxon>Bacillota</taxon>
        <taxon>Bacilli</taxon>
        <taxon>Bacillales</taxon>
        <taxon>Staphylococcaceae</taxon>
        <taxon>Staphylococcus</taxon>
    </lineage>
</organism>
<reference key="1">
    <citation type="journal article" date="2003" name="Mol. Microbiol.">
        <title>Genome-based analysis of virulence genes in a non-biofilm-forming Staphylococcus epidermidis strain (ATCC 12228).</title>
        <authorList>
            <person name="Zhang Y.-Q."/>
            <person name="Ren S.-X."/>
            <person name="Li H.-L."/>
            <person name="Wang Y.-X."/>
            <person name="Fu G."/>
            <person name="Yang J."/>
            <person name="Qin Z.-Q."/>
            <person name="Miao Y.-G."/>
            <person name="Wang W.-Y."/>
            <person name="Chen R.-S."/>
            <person name="Shen Y."/>
            <person name="Chen Z."/>
            <person name="Yuan Z.-H."/>
            <person name="Zhao G.-P."/>
            <person name="Qu D."/>
            <person name="Danchin A."/>
            <person name="Wen Y.-M."/>
        </authorList>
    </citation>
    <scope>NUCLEOTIDE SEQUENCE [LARGE SCALE GENOMIC DNA]</scope>
    <source>
        <strain>ATCC 12228 / FDA PCI 1200</strain>
    </source>
</reference>
<name>MIAB_STAES</name>
<gene>
    <name evidence="1" type="primary">miaB</name>
    <name type="ordered locus">SE_0971</name>
</gene>
<feature type="chain" id="PRO_0000374578" description="tRNA-2-methylthio-N(6)-dimethylallyladenosine synthase">
    <location>
        <begin position="1"/>
        <end position="514"/>
    </location>
</feature>
<feature type="domain" description="MTTase N-terminal" evidence="1">
    <location>
        <begin position="68"/>
        <end position="186"/>
    </location>
</feature>
<feature type="domain" description="Radical SAM core" evidence="2">
    <location>
        <begin position="209"/>
        <end position="439"/>
    </location>
</feature>
<feature type="domain" description="TRAM" evidence="1">
    <location>
        <begin position="442"/>
        <end position="505"/>
    </location>
</feature>
<feature type="binding site" evidence="1">
    <location>
        <position position="77"/>
    </location>
    <ligand>
        <name>[4Fe-4S] cluster</name>
        <dbReference type="ChEBI" id="CHEBI:49883"/>
        <label>1</label>
    </ligand>
</feature>
<feature type="binding site" evidence="1">
    <location>
        <position position="113"/>
    </location>
    <ligand>
        <name>[4Fe-4S] cluster</name>
        <dbReference type="ChEBI" id="CHEBI:49883"/>
        <label>1</label>
    </ligand>
</feature>
<feature type="binding site" evidence="1">
    <location>
        <position position="147"/>
    </location>
    <ligand>
        <name>[4Fe-4S] cluster</name>
        <dbReference type="ChEBI" id="CHEBI:49883"/>
        <label>1</label>
    </ligand>
</feature>
<feature type="binding site" evidence="1">
    <location>
        <position position="223"/>
    </location>
    <ligand>
        <name>[4Fe-4S] cluster</name>
        <dbReference type="ChEBI" id="CHEBI:49883"/>
        <label>2</label>
        <note>4Fe-4S-S-AdoMet</note>
    </ligand>
</feature>
<feature type="binding site" evidence="1">
    <location>
        <position position="227"/>
    </location>
    <ligand>
        <name>[4Fe-4S] cluster</name>
        <dbReference type="ChEBI" id="CHEBI:49883"/>
        <label>2</label>
        <note>4Fe-4S-S-AdoMet</note>
    </ligand>
</feature>
<feature type="binding site" evidence="1">
    <location>
        <position position="230"/>
    </location>
    <ligand>
        <name>[4Fe-4S] cluster</name>
        <dbReference type="ChEBI" id="CHEBI:49883"/>
        <label>2</label>
        <note>4Fe-4S-S-AdoMet</note>
    </ligand>
</feature>
<accession>Q8CSS3</accession>
<protein>
    <recommendedName>
        <fullName evidence="1">tRNA-2-methylthio-N(6)-dimethylallyladenosine synthase</fullName>
        <ecNumber evidence="1">2.8.4.3</ecNumber>
    </recommendedName>
    <alternativeName>
        <fullName evidence="1">(Dimethylallyl)adenosine tRNA methylthiotransferase MiaB</fullName>
    </alternativeName>
    <alternativeName>
        <fullName evidence="1">tRNA-i(6)A37 methylthiotransferase</fullName>
    </alternativeName>
</protein>
<comment type="function">
    <text evidence="1">Catalyzes the methylthiolation of N6-(dimethylallyl)adenosine (i(6)A), leading to the formation of 2-methylthio-N6-(dimethylallyl)adenosine (ms(2)i(6)A) at position 37 in tRNAs that read codons beginning with uridine.</text>
</comment>
<comment type="catalytic activity">
    <reaction evidence="1">
        <text>N(6)-dimethylallyladenosine(37) in tRNA + (sulfur carrier)-SH + AH2 + 2 S-adenosyl-L-methionine = 2-methylsulfanyl-N(6)-dimethylallyladenosine(37) in tRNA + (sulfur carrier)-H + 5'-deoxyadenosine + L-methionine + A + S-adenosyl-L-homocysteine + 2 H(+)</text>
        <dbReference type="Rhea" id="RHEA:37067"/>
        <dbReference type="Rhea" id="RHEA-COMP:10375"/>
        <dbReference type="Rhea" id="RHEA-COMP:10376"/>
        <dbReference type="Rhea" id="RHEA-COMP:14737"/>
        <dbReference type="Rhea" id="RHEA-COMP:14739"/>
        <dbReference type="ChEBI" id="CHEBI:13193"/>
        <dbReference type="ChEBI" id="CHEBI:15378"/>
        <dbReference type="ChEBI" id="CHEBI:17319"/>
        <dbReference type="ChEBI" id="CHEBI:17499"/>
        <dbReference type="ChEBI" id="CHEBI:29917"/>
        <dbReference type="ChEBI" id="CHEBI:57844"/>
        <dbReference type="ChEBI" id="CHEBI:57856"/>
        <dbReference type="ChEBI" id="CHEBI:59789"/>
        <dbReference type="ChEBI" id="CHEBI:64428"/>
        <dbReference type="ChEBI" id="CHEBI:74415"/>
        <dbReference type="ChEBI" id="CHEBI:74417"/>
        <dbReference type="EC" id="2.8.4.3"/>
    </reaction>
</comment>
<comment type="cofactor">
    <cofactor evidence="1">
        <name>[4Fe-4S] cluster</name>
        <dbReference type="ChEBI" id="CHEBI:49883"/>
    </cofactor>
    <text evidence="1">Binds 2 [4Fe-4S] clusters. One cluster is coordinated with 3 cysteines and an exchangeable S-adenosyl-L-methionine.</text>
</comment>
<comment type="subunit">
    <text evidence="1">Monomer.</text>
</comment>
<comment type="subcellular location">
    <subcellularLocation>
        <location evidence="1">Cytoplasm</location>
    </subcellularLocation>
</comment>
<comment type="similarity">
    <text evidence="1">Belongs to the methylthiotransferase family. MiaB subfamily.</text>
</comment>